<sequence length="633" mass="71231">MTAPHETMSFQAEVKQLLHLMIHSLYSNKEIFLRELVSNASDATDKLRFEAIANPSLLENDADLAIRIEADAKARTLKITDNGIGMSRDEAIRNLGTIARSGTKEFFQQLSGDQQKDAALIGQFGVGFYSAFIVADKVTVETRRAGLGAEEAVRWESTGDGEFTVDAIARAERGTTITLHLREGEDDFLSAWRLKSIIQKYSDHISLPIRMPKEVWDAEASTYKRTDEWESVNQASALWTRAKSDITDEQYTAFYQHIAHDNEAPLAWTHNRVEGRSEYTQLLYIPARAPFDLWDRNHKAGLKLYVKRVFIMDDAEQLLPGYLRWVKGVVDSADLPLNVSRELLQESRDVKAIREGCTKRVLSMLETLADSEDEAERAKYATFWQQFGQALKEGVGEDQANQERVAKLLRFASTHNDTAEQNVALAAYVGRMKEGQDKIYYVTADTWSAAKNSPHLEVFRKKGIEVLLLTDRVDEWMLSYLREFDGKELVSVARGDLDLGKLADEAEKAEQEKAEADWKDVIERARAVLAGKAKDVRVTLRLTESASCLVSDEGDMSGYLQRLLKQAGQKAPDAQPILELNPEHALVKKLRDLPEGEAFSDRLQVLFDQALLAEGGMLEDPAAYVQRVNKLLA</sequence>
<name>HTPG_CUPTR</name>
<accession>B3R5J8</accession>
<evidence type="ECO:0000255" key="1">
    <source>
        <dbReference type="HAMAP-Rule" id="MF_00505"/>
    </source>
</evidence>
<organism>
    <name type="scientific">Cupriavidus taiwanensis (strain DSM 17343 / BCRC 17206 / CCUG 44338 / CIP 107171 / LMG 19424 / R1)</name>
    <name type="common">Ralstonia taiwanensis (strain LMG 19424)</name>
    <dbReference type="NCBI Taxonomy" id="977880"/>
    <lineage>
        <taxon>Bacteria</taxon>
        <taxon>Pseudomonadati</taxon>
        <taxon>Pseudomonadota</taxon>
        <taxon>Betaproteobacteria</taxon>
        <taxon>Burkholderiales</taxon>
        <taxon>Burkholderiaceae</taxon>
        <taxon>Cupriavidus</taxon>
    </lineage>
</organism>
<gene>
    <name evidence="1" type="primary">htpG</name>
    <name type="ordered locus">RALTA_A2146</name>
</gene>
<dbReference type="EMBL" id="CU633749">
    <property type="protein sequence ID" value="CAQ70083.1"/>
    <property type="molecule type" value="Genomic_DNA"/>
</dbReference>
<dbReference type="RefSeq" id="WP_012353388.1">
    <property type="nucleotide sequence ID" value="NC_010528.1"/>
</dbReference>
<dbReference type="SMR" id="B3R5J8"/>
<dbReference type="GeneID" id="29762983"/>
<dbReference type="KEGG" id="cti:RALTA_A2146"/>
<dbReference type="eggNOG" id="COG0326">
    <property type="taxonomic scope" value="Bacteria"/>
</dbReference>
<dbReference type="HOGENOM" id="CLU_006684_3_0_4"/>
<dbReference type="BioCyc" id="CTAI977880:RALTA_RS10415-MONOMER"/>
<dbReference type="Proteomes" id="UP000001692">
    <property type="component" value="Chromosome 1"/>
</dbReference>
<dbReference type="GO" id="GO:0005737">
    <property type="term" value="C:cytoplasm"/>
    <property type="evidence" value="ECO:0007669"/>
    <property type="project" value="UniProtKB-SubCell"/>
</dbReference>
<dbReference type="GO" id="GO:0005524">
    <property type="term" value="F:ATP binding"/>
    <property type="evidence" value="ECO:0007669"/>
    <property type="project" value="UniProtKB-UniRule"/>
</dbReference>
<dbReference type="GO" id="GO:0016887">
    <property type="term" value="F:ATP hydrolysis activity"/>
    <property type="evidence" value="ECO:0007669"/>
    <property type="project" value="InterPro"/>
</dbReference>
<dbReference type="GO" id="GO:0140662">
    <property type="term" value="F:ATP-dependent protein folding chaperone"/>
    <property type="evidence" value="ECO:0007669"/>
    <property type="project" value="InterPro"/>
</dbReference>
<dbReference type="GO" id="GO:0051082">
    <property type="term" value="F:unfolded protein binding"/>
    <property type="evidence" value="ECO:0007669"/>
    <property type="project" value="UniProtKB-UniRule"/>
</dbReference>
<dbReference type="CDD" id="cd16927">
    <property type="entry name" value="HATPase_Hsp90-like"/>
    <property type="match status" value="1"/>
</dbReference>
<dbReference type="FunFam" id="3.30.230.80:FF:000002">
    <property type="entry name" value="Molecular chaperone HtpG"/>
    <property type="match status" value="1"/>
</dbReference>
<dbReference type="FunFam" id="3.30.565.10:FF:000009">
    <property type="entry name" value="Molecular chaperone HtpG"/>
    <property type="match status" value="1"/>
</dbReference>
<dbReference type="Gene3D" id="3.30.230.80">
    <property type="match status" value="1"/>
</dbReference>
<dbReference type="Gene3D" id="3.40.50.11260">
    <property type="match status" value="1"/>
</dbReference>
<dbReference type="Gene3D" id="1.20.120.790">
    <property type="entry name" value="Heat shock protein 90, C-terminal domain"/>
    <property type="match status" value="1"/>
</dbReference>
<dbReference type="Gene3D" id="3.30.565.10">
    <property type="entry name" value="Histidine kinase-like ATPase, C-terminal domain"/>
    <property type="match status" value="1"/>
</dbReference>
<dbReference type="HAMAP" id="MF_00505">
    <property type="entry name" value="HSP90"/>
    <property type="match status" value="1"/>
</dbReference>
<dbReference type="InterPro" id="IPR036890">
    <property type="entry name" value="HATPase_C_sf"/>
</dbReference>
<dbReference type="InterPro" id="IPR019805">
    <property type="entry name" value="Heat_shock_protein_90_CS"/>
</dbReference>
<dbReference type="InterPro" id="IPR037196">
    <property type="entry name" value="HSP90_C"/>
</dbReference>
<dbReference type="InterPro" id="IPR001404">
    <property type="entry name" value="Hsp90_fam"/>
</dbReference>
<dbReference type="InterPro" id="IPR020575">
    <property type="entry name" value="Hsp90_N"/>
</dbReference>
<dbReference type="InterPro" id="IPR020568">
    <property type="entry name" value="Ribosomal_Su5_D2-typ_SF"/>
</dbReference>
<dbReference type="NCBIfam" id="NF003555">
    <property type="entry name" value="PRK05218.1"/>
    <property type="match status" value="1"/>
</dbReference>
<dbReference type="PANTHER" id="PTHR11528">
    <property type="entry name" value="HEAT SHOCK PROTEIN 90 FAMILY MEMBER"/>
    <property type="match status" value="1"/>
</dbReference>
<dbReference type="Pfam" id="PF13589">
    <property type="entry name" value="HATPase_c_3"/>
    <property type="match status" value="1"/>
</dbReference>
<dbReference type="Pfam" id="PF00183">
    <property type="entry name" value="HSP90"/>
    <property type="match status" value="1"/>
</dbReference>
<dbReference type="PIRSF" id="PIRSF002583">
    <property type="entry name" value="Hsp90"/>
    <property type="match status" value="1"/>
</dbReference>
<dbReference type="PRINTS" id="PR00775">
    <property type="entry name" value="HEATSHOCK90"/>
</dbReference>
<dbReference type="SMART" id="SM00387">
    <property type="entry name" value="HATPase_c"/>
    <property type="match status" value="1"/>
</dbReference>
<dbReference type="SUPFAM" id="SSF55874">
    <property type="entry name" value="ATPase domain of HSP90 chaperone/DNA topoisomerase II/histidine kinase"/>
    <property type="match status" value="1"/>
</dbReference>
<dbReference type="SUPFAM" id="SSF110942">
    <property type="entry name" value="HSP90 C-terminal domain"/>
    <property type="match status" value="1"/>
</dbReference>
<dbReference type="SUPFAM" id="SSF54211">
    <property type="entry name" value="Ribosomal protein S5 domain 2-like"/>
    <property type="match status" value="1"/>
</dbReference>
<dbReference type="PROSITE" id="PS00298">
    <property type="entry name" value="HSP90"/>
    <property type="match status" value="1"/>
</dbReference>
<protein>
    <recommendedName>
        <fullName evidence="1">Chaperone protein HtpG</fullName>
    </recommendedName>
    <alternativeName>
        <fullName evidence="1">Heat shock protein HtpG</fullName>
    </alternativeName>
    <alternativeName>
        <fullName evidence="1">High temperature protein G</fullName>
    </alternativeName>
</protein>
<keyword id="KW-0067">ATP-binding</keyword>
<keyword id="KW-0143">Chaperone</keyword>
<keyword id="KW-0963">Cytoplasm</keyword>
<keyword id="KW-0547">Nucleotide-binding</keyword>
<keyword id="KW-0346">Stress response</keyword>
<feature type="chain" id="PRO_1000127027" description="Chaperone protein HtpG">
    <location>
        <begin position="1"/>
        <end position="633"/>
    </location>
</feature>
<feature type="region of interest" description="A; substrate-binding" evidence="1">
    <location>
        <begin position="1"/>
        <end position="341"/>
    </location>
</feature>
<feature type="region of interest" description="B" evidence="1">
    <location>
        <begin position="342"/>
        <end position="562"/>
    </location>
</feature>
<feature type="region of interest" description="C" evidence="1">
    <location>
        <begin position="563"/>
        <end position="633"/>
    </location>
</feature>
<proteinExistence type="inferred from homology"/>
<comment type="function">
    <text evidence="1">Molecular chaperone. Has ATPase activity.</text>
</comment>
<comment type="subunit">
    <text evidence="1">Homodimer.</text>
</comment>
<comment type="subcellular location">
    <subcellularLocation>
        <location evidence="1">Cytoplasm</location>
    </subcellularLocation>
</comment>
<comment type="similarity">
    <text evidence="1">Belongs to the heat shock protein 90 family.</text>
</comment>
<reference key="1">
    <citation type="journal article" date="2008" name="Genome Res.">
        <title>Genome sequence of the beta-rhizobium Cupriavidus taiwanensis and comparative genomics of rhizobia.</title>
        <authorList>
            <person name="Amadou C."/>
            <person name="Pascal G."/>
            <person name="Mangenot S."/>
            <person name="Glew M."/>
            <person name="Bontemps C."/>
            <person name="Capela D."/>
            <person name="Carrere S."/>
            <person name="Cruveiller S."/>
            <person name="Dossat C."/>
            <person name="Lajus A."/>
            <person name="Marchetti M."/>
            <person name="Poinsot V."/>
            <person name="Rouy Z."/>
            <person name="Servin B."/>
            <person name="Saad M."/>
            <person name="Schenowitz C."/>
            <person name="Barbe V."/>
            <person name="Batut J."/>
            <person name="Medigue C."/>
            <person name="Masson-Boivin C."/>
        </authorList>
    </citation>
    <scope>NUCLEOTIDE SEQUENCE [LARGE SCALE GENOMIC DNA]</scope>
    <source>
        <strain>DSM 17343 / BCRC 17206 / CCUG 44338 / CIP 107171 / LMG 19424 / R1</strain>
    </source>
</reference>